<name>NARX_ECOLI</name>
<reference key="1">
    <citation type="journal article" date="1989" name="Nucleic Acids Res.">
        <title>The narX and narL genes encoding the nitrate-sensing regulators of Escherichia coli are homologous to a family of prokaryotic two-component regulatory genes.</title>
        <authorList>
            <person name="Nohno T."/>
            <person name="Noji S."/>
            <person name="Taniguchi S."/>
            <person name="Saito T."/>
        </authorList>
    </citation>
    <scope>NUCLEOTIDE SEQUENCE [GENOMIC DNA]</scope>
    <source>
        <strain>K12</strain>
    </source>
</reference>
<reference key="2">
    <citation type="journal article" date="1996" name="DNA Res.">
        <title>A 718-kb DNA sequence of the Escherichia coli K-12 genome corresponding to the 12.7-28.0 min region on the linkage map.</title>
        <authorList>
            <person name="Oshima T."/>
            <person name="Aiba H."/>
            <person name="Baba T."/>
            <person name="Fujita K."/>
            <person name="Hayashi K."/>
            <person name="Honjo A."/>
            <person name="Ikemoto K."/>
            <person name="Inada T."/>
            <person name="Itoh T."/>
            <person name="Kajihara M."/>
            <person name="Kanai K."/>
            <person name="Kashimoto K."/>
            <person name="Kimura S."/>
            <person name="Kitagawa M."/>
            <person name="Makino K."/>
            <person name="Masuda S."/>
            <person name="Miki T."/>
            <person name="Mizobuchi K."/>
            <person name="Mori H."/>
            <person name="Motomura K."/>
            <person name="Nakamura Y."/>
            <person name="Nashimoto H."/>
            <person name="Nishio Y."/>
            <person name="Saito N."/>
            <person name="Sampei G."/>
            <person name="Seki Y."/>
            <person name="Tagami H."/>
            <person name="Takemoto K."/>
            <person name="Wada C."/>
            <person name="Yamamoto Y."/>
            <person name="Yano M."/>
            <person name="Horiuchi T."/>
        </authorList>
    </citation>
    <scope>NUCLEOTIDE SEQUENCE [LARGE SCALE GENOMIC DNA]</scope>
    <source>
        <strain>K12 / W3110 / ATCC 27325 / DSM 5911</strain>
    </source>
</reference>
<reference key="3">
    <citation type="journal article" date="1997" name="Science">
        <title>The complete genome sequence of Escherichia coli K-12.</title>
        <authorList>
            <person name="Blattner F.R."/>
            <person name="Plunkett G. III"/>
            <person name="Bloch C.A."/>
            <person name="Perna N.T."/>
            <person name="Burland V."/>
            <person name="Riley M."/>
            <person name="Collado-Vides J."/>
            <person name="Glasner J.D."/>
            <person name="Rode C.K."/>
            <person name="Mayhew G.F."/>
            <person name="Gregor J."/>
            <person name="Davis N.W."/>
            <person name="Kirkpatrick H.A."/>
            <person name="Goeden M.A."/>
            <person name="Rose D.J."/>
            <person name="Mau B."/>
            <person name="Shao Y."/>
        </authorList>
    </citation>
    <scope>NUCLEOTIDE SEQUENCE [LARGE SCALE GENOMIC DNA]</scope>
    <source>
        <strain>K12 / MG1655 / ATCC 47076</strain>
    </source>
</reference>
<reference key="4">
    <citation type="journal article" date="2006" name="Mol. Syst. Biol.">
        <title>Highly accurate genome sequences of Escherichia coli K-12 strains MG1655 and W3110.</title>
        <authorList>
            <person name="Hayashi K."/>
            <person name="Morooka N."/>
            <person name="Yamamoto Y."/>
            <person name="Fujita K."/>
            <person name="Isono K."/>
            <person name="Choi S."/>
            <person name="Ohtsubo E."/>
            <person name="Baba T."/>
            <person name="Wanner B.L."/>
            <person name="Mori H."/>
            <person name="Horiuchi T."/>
        </authorList>
    </citation>
    <scope>NUCLEOTIDE SEQUENCE [LARGE SCALE GENOMIC DNA]</scope>
    <source>
        <strain>K12 / W3110 / ATCC 27325 / DSM 5911</strain>
    </source>
</reference>
<reference key="5">
    <citation type="journal article" date="1989" name="FEBS Lett.">
        <title>The narK gene product participates in nitrate transport induced in Escherichia coli nitrate-respiring cells.</title>
        <authorList>
            <person name="Noji S."/>
            <person name="Nohno T."/>
            <person name="Saito T."/>
            <person name="Taniguchi S."/>
        </authorList>
    </citation>
    <scope>NUCLEOTIDE SEQUENCE [GENOMIC DNA] OF 1-55</scope>
    <source>
        <strain>K12</strain>
    </source>
</reference>
<reference key="6">
    <citation type="journal article" date="1989" name="J. Bacteriol.">
        <title>Structure of genes narL and narX of the nar (nitrate reductase) locus in Escherichia coli K-12.</title>
        <authorList>
            <person name="Stewart V."/>
            <person name="Parales J. Jr."/>
            <person name="Merkel S.M."/>
        </authorList>
    </citation>
    <scope>NUCLEOTIDE SEQUENCE [GENOMIC DNA] OF 56-598</scope>
    <source>
        <strain>K12</strain>
    </source>
</reference>
<reference key="7">
    <citation type="submission" date="1992-08" db="EMBL/GenBank/DDBJ databases">
        <authorList>
            <person name="Cavicchioli R."/>
            <person name="Gunsalus R.P."/>
            <person name="Chiang R.C."/>
        </authorList>
    </citation>
    <scope>NUCLEOTIDE SEQUENCE [GENOMIC DNA] OF 1-60</scope>
    <source>
        <strain>K12 / MC4100 / ATCC 35695 / DSM 6574</strain>
    </source>
</reference>
<reference key="8">
    <citation type="journal article" date="2005" name="Science">
        <title>Global topology analysis of the Escherichia coli inner membrane proteome.</title>
        <authorList>
            <person name="Daley D.O."/>
            <person name="Rapp M."/>
            <person name="Granseth E."/>
            <person name="Melen K."/>
            <person name="Drew D."/>
            <person name="von Heijne G."/>
        </authorList>
    </citation>
    <scope>SUBCELLULAR LOCATION</scope>
    <source>
        <strain>K12 / MG1655 / ATCC 47076</strain>
    </source>
</reference>
<organism>
    <name type="scientific">Escherichia coli (strain K12)</name>
    <dbReference type="NCBI Taxonomy" id="83333"/>
    <lineage>
        <taxon>Bacteria</taxon>
        <taxon>Pseudomonadati</taxon>
        <taxon>Pseudomonadota</taxon>
        <taxon>Gammaproteobacteria</taxon>
        <taxon>Enterobacterales</taxon>
        <taxon>Enterobacteriaceae</taxon>
        <taxon>Escherichia</taxon>
    </lineage>
</organism>
<gene>
    <name type="primary">narX</name>
    <name type="synonym">narR</name>
    <name type="ordered locus">b1222</name>
    <name type="ordered locus">JW1213</name>
</gene>
<keyword id="KW-0002">3D-structure</keyword>
<keyword id="KW-0067">ATP-binding</keyword>
<keyword id="KW-0997">Cell inner membrane</keyword>
<keyword id="KW-1003">Cell membrane</keyword>
<keyword id="KW-0418">Kinase</keyword>
<keyword id="KW-0472">Membrane</keyword>
<keyword id="KW-0534">Nitrate assimilation</keyword>
<keyword id="KW-0547">Nucleotide-binding</keyword>
<keyword id="KW-0597">Phosphoprotein</keyword>
<keyword id="KW-1185">Reference proteome</keyword>
<keyword id="KW-0808">Transferase</keyword>
<keyword id="KW-0812">Transmembrane</keyword>
<keyword id="KW-1133">Transmembrane helix</keyword>
<keyword id="KW-0902">Two-component regulatory system</keyword>
<comment type="function">
    <text>Acts as a sensor for nitrate/nitrite and transduces signal of nitrate availability to the NarL protein and of both nitrate/nitrite to the NarP protein. NarX probably activates NarL and NarP by phosphorylation in the presence of nitrate. NarX also plays a negative role in controlling NarL activity, probably through dephosphorylation in the absence of nitrate.</text>
</comment>
<comment type="catalytic activity">
    <reaction>
        <text>ATP + protein L-histidine = ADP + protein N-phospho-L-histidine.</text>
        <dbReference type="EC" id="2.7.13.3"/>
    </reaction>
</comment>
<comment type="interaction">
    <interactant intactId="EBI-1112775">
        <id>P0AFA2</id>
    </interactant>
    <interactant intactId="EBI-1122899">
        <id>P0AF28</id>
        <label>narL</label>
    </interactant>
    <organismsDiffer>false</organismsDiffer>
    <experiments>2</experiments>
</comment>
<comment type="subcellular location">
    <subcellularLocation>
        <location evidence="4">Cell inner membrane</location>
        <topology evidence="4">Multi-pass membrane protein</topology>
    </subcellularLocation>
</comment>
<evidence type="ECO:0000255" key="1"/>
<evidence type="ECO:0000255" key="2">
    <source>
        <dbReference type="PROSITE-ProRule" id="PRU00102"/>
    </source>
</evidence>
<evidence type="ECO:0000255" key="3">
    <source>
        <dbReference type="PROSITE-ProRule" id="PRU00107"/>
    </source>
</evidence>
<evidence type="ECO:0000269" key="4">
    <source>
    </source>
</evidence>
<evidence type="ECO:0000305" key="5"/>
<evidence type="ECO:0007829" key="6">
    <source>
        <dbReference type="PDB" id="3EZH"/>
    </source>
</evidence>
<feature type="chain" id="PRO_0000074812" description="Nitrate/nitrite sensor protein NarX">
    <location>
        <begin position="1"/>
        <end position="598"/>
    </location>
</feature>
<feature type="topological domain" description="Cytoplasmic" evidence="1">
    <location>
        <begin position="1"/>
        <end position="14"/>
    </location>
</feature>
<feature type="transmembrane region" description="Helical" evidence="1">
    <location>
        <begin position="15"/>
        <end position="37"/>
    </location>
</feature>
<feature type="topological domain" description="Periplasmic" evidence="1">
    <location>
        <begin position="38"/>
        <end position="151"/>
    </location>
</feature>
<feature type="transmembrane region" description="Helical" evidence="1">
    <location>
        <begin position="152"/>
        <end position="174"/>
    </location>
</feature>
<feature type="topological domain" description="Cytoplasmic" evidence="1">
    <location>
        <begin position="175"/>
        <end position="598"/>
    </location>
</feature>
<feature type="domain" description="HAMP" evidence="2">
    <location>
        <begin position="176"/>
        <end position="228"/>
    </location>
</feature>
<feature type="domain" description="Histidine kinase" evidence="3">
    <location>
        <begin position="393"/>
        <end position="587"/>
    </location>
</feature>
<feature type="modified residue" description="Phosphohistidine; by autocatalysis" evidence="3">
    <location>
        <position position="399"/>
    </location>
</feature>
<feature type="sequence conflict" description="In Ref. 1 and 5." evidence="5" ref="1 5">
    <original>GSAHAINKAGS</original>
    <variation>AAPMRSTKRDA</variation>
    <location>
        <begin position="42"/>
        <end position="52"/>
    </location>
</feature>
<feature type="sequence conflict" description="In Ref. 6; AAA24198." evidence="5" ref="6">
    <original>A</original>
    <variation>G</variation>
    <location>
        <position position="374"/>
    </location>
</feature>
<feature type="helix" evidence="6">
    <location>
        <begin position="43"/>
        <end position="62"/>
    </location>
</feature>
<feature type="helix" evidence="6">
    <location>
        <begin position="68"/>
        <end position="70"/>
    </location>
</feature>
<feature type="helix" evidence="6">
    <location>
        <begin position="71"/>
        <end position="81"/>
    </location>
</feature>
<feature type="helix" evidence="6">
    <location>
        <begin position="84"/>
        <end position="93"/>
    </location>
</feature>
<feature type="helix" evidence="6">
    <location>
        <begin position="96"/>
        <end position="108"/>
    </location>
</feature>
<feature type="helix" evidence="6">
    <location>
        <begin position="110"/>
        <end position="116"/>
    </location>
</feature>
<feature type="helix" evidence="6">
    <location>
        <begin position="120"/>
        <end position="122"/>
    </location>
</feature>
<feature type="helix" evidence="6">
    <location>
        <begin position="124"/>
        <end position="150"/>
    </location>
</feature>
<sequence length="598" mass="67084">MLKRCLSPLTLVNQVALIVLLSTAIGLAGMAVSGWLVQGVQGSAHAINKAGSLRMQSYRLLAAVPLSEKDKPLIKEMEQTAFSAELTRAAERDGQLAQLQGLQDYWRNELIPALMRAQNRETVSADVSQFVAGLDQLVSGFDRTTEMRIETVVLVHRVMAVFMALLLVFTIIWLRARLLQPWRQLLAMASAVSHRDFTQRANISGRNEMAMLGTALNNMSAELAESYAVLEQRVQEKTAGLEHKNQILSFLWQANRRLHSRAPLCERLSPVLNGLQNLTLLRDIELRVYDTDDEENHQEFTCQPDMTCDDKGCQLCPRGVLPVGDRGTTLKWRLADSHTQYGILLATLPQGRHLSHDQQQLVDTLVEQLTATLALDRHQERQQQLIVMEERATIARELHDSIAQSLSCMKMQVSCLQMQGDALPESSRELLSQIRNELNASWAQLRELLTTFRLQLTEPGLRPALEASCEEYSAKFGFPVKLDYQLPPRLVPSHQAIHLLQIAREALSNALKHSQASEVVVTVAQNDNQVKLTVQDNGCGVPENAIRSNHYGMIIMRDRAQSLRGDCRVRRRESGGTEVVVTFIPEKTFTDVQGDTHE</sequence>
<dbReference type="EC" id="2.7.13.3"/>
<dbReference type="EMBL" id="X13360">
    <property type="protein sequence ID" value="CAA31741.1"/>
    <property type="molecule type" value="Genomic_DNA"/>
</dbReference>
<dbReference type="EMBL" id="U00096">
    <property type="protein sequence ID" value="AAC74306.1"/>
    <property type="molecule type" value="Genomic_DNA"/>
</dbReference>
<dbReference type="EMBL" id="AP009048">
    <property type="protein sequence ID" value="BAA36090.1"/>
    <property type="molecule type" value="Genomic_DNA"/>
</dbReference>
<dbReference type="EMBL" id="X15996">
    <property type="protein sequence ID" value="CAA34125.1"/>
    <property type="molecule type" value="Genomic_DNA"/>
</dbReference>
<dbReference type="EMBL" id="M24910">
    <property type="protein sequence ID" value="AAA24198.1"/>
    <property type="molecule type" value="Genomic_DNA"/>
</dbReference>
<dbReference type="EMBL" id="X65715">
    <property type="protein sequence ID" value="CAA46631.1"/>
    <property type="molecule type" value="Genomic_DNA"/>
</dbReference>
<dbReference type="EMBL" id="X69189">
    <property type="protein sequence ID" value="CAA48934.1"/>
    <property type="molecule type" value="Genomic_DNA"/>
</dbReference>
<dbReference type="PIR" id="S26137">
    <property type="entry name" value="RGECNX"/>
</dbReference>
<dbReference type="RefSeq" id="NP_415740.1">
    <property type="nucleotide sequence ID" value="NC_000913.3"/>
</dbReference>
<dbReference type="RefSeq" id="WP_000918073.1">
    <property type="nucleotide sequence ID" value="NZ_STEB01000023.1"/>
</dbReference>
<dbReference type="PDB" id="3EZH">
    <property type="method" value="X-ray"/>
    <property type="resolution" value="1.70 A"/>
    <property type="chains" value="A/B=38-151"/>
</dbReference>
<dbReference type="PDB" id="3EZI">
    <property type="method" value="X-ray"/>
    <property type="resolution" value="1.70 A"/>
    <property type="chains" value="A/B/C/D=42-148"/>
</dbReference>
<dbReference type="PDBsum" id="3EZH"/>
<dbReference type="PDBsum" id="3EZI"/>
<dbReference type="SMR" id="P0AFA2"/>
<dbReference type="BioGRID" id="4263270">
    <property type="interactions" value="23"/>
</dbReference>
<dbReference type="DIP" id="DIP-35785N"/>
<dbReference type="FunCoup" id="P0AFA2">
    <property type="interactions" value="202"/>
</dbReference>
<dbReference type="IntAct" id="P0AFA2">
    <property type="interactions" value="5"/>
</dbReference>
<dbReference type="STRING" id="511145.b1222"/>
<dbReference type="jPOST" id="P0AFA2"/>
<dbReference type="PaxDb" id="511145-b1222"/>
<dbReference type="EnsemblBacteria" id="AAC74306">
    <property type="protein sequence ID" value="AAC74306"/>
    <property type="gene ID" value="b1222"/>
</dbReference>
<dbReference type="GeneID" id="75203337"/>
<dbReference type="GeneID" id="945788"/>
<dbReference type="KEGG" id="ecj:JW1213"/>
<dbReference type="KEGG" id="eco:b1222"/>
<dbReference type="KEGG" id="ecoc:C3026_07185"/>
<dbReference type="PATRIC" id="fig|1411691.4.peg.1060"/>
<dbReference type="EchoBASE" id="EB0640"/>
<dbReference type="eggNOG" id="COG3850">
    <property type="taxonomic scope" value="Bacteria"/>
</dbReference>
<dbReference type="HOGENOM" id="CLU_000445_20_10_6"/>
<dbReference type="InParanoid" id="P0AFA2"/>
<dbReference type="OMA" id="RSNHYGL"/>
<dbReference type="OrthoDB" id="9811306at2"/>
<dbReference type="PhylomeDB" id="P0AFA2"/>
<dbReference type="BioCyc" id="EcoCyc:NARX-MONOMER"/>
<dbReference type="BioCyc" id="MetaCyc:NARX-MONOMER"/>
<dbReference type="BRENDA" id="2.7.13.3">
    <property type="organism ID" value="2026"/>
</dbReference>
<dbReference type="EvolutionaryTrace" id="P0AFA2"/>
<dbReference type="PRO" id="PR:P0AFA2"/>
<dbReference type="Proteomes" id="UP000000625">
    <property type="component" value="Chromosome"/>
</dbReference>
<dbReference type="GO" id="GO:0030288">
    <property type="term" value="C:outer membrane-bounded periplasmic space"/>
    <property type="evidence" value="ECO:0000255"/>
    <property type="project" value="EcoCyc"/>
</dbReference>
<dbReference type="GO" id="GO:0005886">
    <property type="term" value="C:plasma membrane"/>
    <property type="evidence" value="ECO:0000314"/>
    <property type="project" value="EcoCyc"/>
</dbReference>
<dbReference type="GO" id="GO:0005524">
    <property type="term" value="F:ATP binding"/>
    <property type="evidence" value="ECO:0007669"/>
    <property type="project" value="UniProtKB-KW"/>
</dbReference>
<dbReference type="GO" id="GO:0004721">
    <property type="term" value="F:phosphoprotein phosphatase activity"/>
    <property type="evidence" value="ECO:0000314"/>
    <property type="project" value="EcoCyc"/>
</dbReference>
<dbReference type="GO" id="GO:0000155">
    <property type="term" value="F:phosphorelay sensor kinase activity"/>
    <property type="evidence" value="ECO:0000314"/>
    <property type="project" value="EcoCyc"/>
</dbReference>
<dbReference type="GO" id="GO:0042803">
    <property type="term" value="F:protein homodimerization activity"/>
    <property type="evidence" value="ECO:0000314"/>
    <property type="project" value="EcoCyc"/>
</dbReference>
<dbReference type="GO" id="GO:0071249">
    <property type="term" value="P:cellular response to nitrate"/>
    <property type="evidence" value="ECO:0000270"/>
    <property type="project" value="EcoCyc"/>
</dbReference>
<dbReference type="GO" id="GO:0071250">
    <property type="term" value="P:cellular response to nitrite"/>
    <property type="evidence" value="ECO:0000315"/>
    <property type="project" value="EcoCyc"/>
</dbReference>
<dbReference type="GO" id="GO:0006974">
    <property type="term" value="P:DNA damage response"/>
    <property type="evidence" value="ECO:0000270"/>
    <property type="project" value="EcoliWiki"/>
</dbReference>
<dbReference type="GO" id="GO:0042128">
    <property type="term" value="P:nitrate assimilation"/>
    <property type="evidence" value="ECO:0007669"/>
    <property type="project" value="UniProtKB-KW"/>
</dbReference>
<dbReference type="GO" id="GO:0007165">
    <property type="term" value="P:signal transduction"/>
    <property type="evidence" value="ECO:0000314"/>
    <property type="project" value="EcoCyc"/>
</dbReference>
<dbReference type="CDD" id="cd06225">
    <property type="entry name" value="HAMP"/>
    <property type="match status" value="1"/>
</dbReference>
<dbReference type="CDD" id="cd16917">
    <property type="entry name" value="HATPase_UhpB-NarQ-NarX-like"/>
    <property type="match status" value="1"/>
</dbReference>
<dbReference type="CDD" id="cd22900">
    <property type="entry name" value="NarX_sensor"/>
    <property type="match status" value="1"/>
</dbReference>
<dbReference type="FunFam" id="1.20.5.1930:FF:000002">
    <property type="entry name" value="Sensor protein"/>
    <property type="match status" value="1"/>
</dbReference>
<dbReference type="FunFam" id="3.30.565.10:FF:000029">
    <property type="entry name" value="Sensor protein"/>
    <property type="match status" value="1"/>
</dbReference>
<dbReference type="Gene3D" id="1.20.5.1930">
    <property type="match status" value="1"/>
</dbReference>
<dbReference type="Gene3D" id="6.10.340.10">
    <property type="match status" value="1"/>
</dbReference>
<dbReference type="Gene3D" id="1.20.120.960">
    <property type="entry name" value="Histidine kinase NarX, sensor domain"/>
    <property type="match status" value="1"/>
</dbReference>
<dbReference type="Gene3D" id="3.30.565.10">
    <property type="entry name" value="Histidine kinase-like ATPase, C-terminal domain"/>
    <property type="match status" value="1"/>
</dbReference>
<dbReference type="InterPro" id="IPR003660">
    <property type="entry name" value="HAMP_dom"/>
</dbReference>
<dbReference type="InterPro" id="IPR036890">
    <property type="entry name" value="HATPase_C_sf"/>
</dbReference>
<dbReference type="InterPro" id="IPR005467">
    <property type="entry name" value="His_kinase_dom"/>
</dbReference>
<dbReference type="InterPro" id="IPR029095">
    <property type="entry name" value="NarX-like_N"/>
</dbReference>
<dbReference type="InterPro" id="IPR042295">
    <property type="entry name" value="NarX-like_N_sf"/>
</dbReference>
<dbReference type="InterPro" id="IPR050482">
    <property type="entry name" value="Sensor_HK_TwoCompSys"/>
</dbReference>
<dbReference type="InterPro" id="IPR016380">
    <property type="entry name" value="Sig_transdc_His_kin_NarX/NarQ"/>
</dbReference>
<dbReference type="InterPro" id="IPR011712">
    <property type="entry name" value="Sig_transdc_His_kin_sub3_dim/P"/>
</dbReference>
<dbReference type="NCBIfam" id="NF007896">
    <property type="entry name" value="PRK10600.1"/>
    <property type="match status" value="1"/>
</dbReference>
<dbReference type="PANTHER" id="PTHR24421">
    <property type="entry name" value="NITRATE/NITRITE SENSOR PROTEIN NARX-RELATED"/>
    <property type="match status" value="1"/>
</dbReference>
<dbReference type="PANTHER" id="PTHR24421:SF51">
    <property type="entry name" value="NITRATE_NITRITE SENSOR PROTEIN NARX"/>
    <property type="match status" value="1"/>
</dbReference>
<dbReference type="Pfam" id="PF00672">
    <property type="entry name" value="HAMP"/>
    <property type="match status" value="1"/>
</dbReference>
<dbReference type="Pfam" id="PF02518">
    <property type="entry name" value="HATPase_c"/>
    <property type="match status" value="1"/>
</dbReference>
<dbReference type="Pfam" id="PF07730">
    <property type="entry name" value="HisKA_3"/>
    <property type="match status" value="1"/>
</dbReference>
<dbReference type="Pfam" id="PF13675">
    <property type="entry name" value="PilJ"/>
    <property type="match status" value="1"/>
</dbReference>
<dbReference type="PIRSF" id="PIRSF003167">
    <property type="entry name" value="STHK_NarX/NarQ"/>
    <property type="match status" value="1"/>
</dbReference>
<dbReference type="SMART" id="SM00304">
    <property type="entry name" value="HAMP"/>
    <property type="match status" value="1"/>
</dbReference>
<dbReference type="SMART" id="SM00387">
    <property type="entry name" value="HATPase_c"/>
    <property type="match status" value="1"/>
</dbReference>
<dbReference type="SUPFAM" id="SSF55874">
    <property type="entry name" value="ATPase domain of HSP90 chaperone/DNA topoisomerase II/histidine kinase"/>
    <property type="match status" value="1"/>
</dbReference>
<dbReference type="SUPFAM" id="SSF158472">
    <property type="entry name" value="HAMP domain-like"/>
    <property type="match status" value="1"/>
</dbReference>
<dbReference type="PROSITE" id="PS50885">
    <property type="entry name" value="HAMP"/>
    <property type="match status" value="1"/>
</dbReference>
<dbReference type="PROSITE" id="PS50109">
    <property type="entry name" value="HIS_KIN"/>
    <property type="match status" value="1"/>
</dbReference>
<protein>
    <recommendedName>
        <fullName>Nitrate/nitrite sensor protein NarX</fullName>
        <ecNumber>2.7.13.3</ecNumber>
    </recommendedName>
</protein>
<proteinExistence type="evidence at protein level"/>
<accession>P0AFA2</accession>
<accession>P10956</accession>